<protein>
    <recommendedName>
        <fullName evidence="1">Methionine aminopeptidase 2-3</fullName>
        <shortName evidence="1">MAP 2-3</shortName>
        <shortName evidence="1">MetAP 2-3</shortName>
        <ecNumber evidence="1">3.4.11.18</ecNumber>
    </recommendedName>
    <alternativeName>
        <fullName evidence="1">Peptidase M</fullName>
    </alternativeName>
</protein>
<comment type="function">
    <text evidence="1">Cotranslationally removes the N-terminal methionine from nascent proteins. The N-terminal methionine is often cleaved when the second residue in the primary sequence is small and uncharged (Met-Ala-, Cys, Gly, Pro, Ser, Thr, or Val).</text>
</comment>
<comment type="catalytic activity">
    <reaction evidence="1">
        <text>Release of N-terminal amino acids, preferentially methionine, from peptides and arylamides.</text>
        <dbReference type="EC" id="3.4.11.18"/>
    </reaction>
</comment>
<comment type="cofactor">
    <cofactor evidence="1">
        <name>Co(2+)</name>
        <dbReference type="ChEBI" id="CHEBI:48828"/>
    </cofactor>
    <cofactor evidence="1">
        <name>Zn(2+)</name>
        <dbReference type="ChEBI" id="CHEBI:29105"/>
    </cofactor>
    <cofactor evidence="1">
        <name>Mn(2+)</name>
        <dbReference type="ChEBI" id="CHEBI:29035"/>
    </cofactor>
    <cofactor evidence="1">
        <name>Fe(2+)</name>
        <dbReference type="ChEBI" id="CHEBI:29033"/>
    </cofactor>
    <text evidence="1">Binds 2 divalent metal cations per subunit. Has a high-affinity and a low affinity metal-binding site. The true nature of the physiological cofactor is under debate. The enzyme is active with cobalt, zinc, manganese or divalent iron ions. Most likely, methionine aminopeptidases function as mononuclear Fe(2+)-metalloproteases under physiological conditions, and the catalytically relevant metal-binding site has been assigned to the histidine-containing high-affinity site.</text>
</comment>
<comment type="subcellular location">
    <subcellularLocation>
        <location evidence="1">Cytoplasm</location>
    </subcellularLocation>
</comment>
<comment type="similarity">
    <text evidence="1">Belongs to the peptidase M24A family. Methionine aminopeptidase eukaryotic type 2 subfamily.</text>
</comment>
<comment type="sequence caution" evidence="3">
    <conflict type="erroneous gene model prediction">
        <sequence resource="EMBL-CDS" id="EDP49168"/>
    </conflict>
</comment>
<dbReference type="EC" id="3.4.11.18" evidence="1"/>
<dbReference type="EMBL" id="DS499600">
    <property type="protein sequence ID" value="EDP49168.1"/>
    <property type="status" value="ALT_SEQ"/>
    <property type="molecule type" value="Genomic_DNA"/>
</dbReference>
<dbReference type="SMR" id="B0YAX5"/>
<dbReference type="OrthoDB" id="65903at5052"/>
<dbReference type="Proteomes" id="UP000001699">
    <property type="component" value="Unassembled WGS sequence"/>
</dbReference>
<dbReference type="GO" id="GO:0005737">
    <property type="term" value="C:cytoplasm"/>
    <property type="evidence" value="ECO:0007669"/>
    <property type="project" value="UniProtKB-SubCell"/>
</dbReference>
<dbReference type="GO" id="GO:0004239">
    <property type="term" value="F:initiator methionyl aminopeptidase activity"/>
    <property type="evidence" value="ECO:0007669"/>
    <property type="project" value="UniProtKB-UniRule"/>
</dbReference>
<dbReference type="GO" id="GO:0046872">
    <property type="term" value="F:metal ion binding"/>
    <property type="evidence" value="ECO:0007669"/>
    <property type="project" value="UniProtKB-UniRule"/>
</dbReference>
<dbReference type="GO" id="GO:0070006">
    <property type="term" value="F:metalloaminopeptidase activity"/>
    <property type="evidence" value="ECO:0007669"/>
    <property type="project" value="UniProtKB-UniRule"/>
</dbReference>
<dbReference type="GO" id="GO:0006508">
    <property type="term" value="P:proteolysis"/>
    <property type="evidence" value="ECO:0007669"/>
    <property type="project" value="UniProtKB-KW"/>
</dbReference>
<dbReference type="CDD" id="cd01088">
    <property type="entry name" value="MetAP2"/>
    <property type="match status" value="1"/>
</dbReference>
<dbReference type="Gene3D" id="3.90.230.10">
    <property type="entry name" value="Creatinase/methionine aminopeptidase superfamily"/>
    <property type="match status" value="1"/>
</dbReference>
<dbReference type="Gene3D" id="1.10.10.10">
    <property type="entry name" value="Winged helix-like DNA-binding domain superfamily/Winged helix DNA-binding domain"/>
    <property type="match status" value="1"/>
</dbReference>
<dbReference type="HAMAP" id="MF_03175">
    <property type="entry name" value="MetAP_2_euk"/>
    <property type="match status" value="1"/>
</dbReference>
<dbReference type="InterPro" id="IPR036005">
    <property type="entry name" value="Creatinase/aminopeptidase-like"/>
</dbReference>
<dbReference type="InterPro" id="IPR050247">
    <property type="entry name" value="Met_Aminopeptidase_Type2"/>
</dbReference>
<dbReference type="InterPro" id="IPR000994">
    <property type="entry name" value="Pept_M24"/>
</dbReference>
<dbReference type="InterPro" id="IPR001714">
    <property type="entry name" value="Pept_M24_MAP"/>
</dbReference>
<dbReference type="InterPro" id="IPR002468">
    <property type="entry name" value="Pept_M24A_MAP2"/>
</dbReference>
<dbReference type="InterPro" id="IPR036388">
    <property type="entry name" value="WH-like_DNA-bd_sf"/>
</dbReference>
<dbReference type="InterPro" id="IPR036390">
    <property type="entry name" value="WH_DNA-bd_sf"/>
</dbReference>
<dbReference type="NCBIfam" id="TIGR00501">
    <property type="entry name" value="met_pdase_II"/>
    <property type="match status" value="1"/>
</dbReference>
<dbReference type="PANTHER" id="PTHR45777">
    <property type="entry name" value="METHIONINE AMINOPEPTIDASE 2"/>
    <property type="match status" value="1"/>
</dbReference>
<dbReference type="PANTHER" id="PTHR45777:SF2">
    <property type="entry name" value="METHIONINE AMINOPEPTIDASE 2"/>
    <property type="match status" value="1"/>
</dbReference>
<dbReference type="Pfam" id="PF00557">
    <property type="entry name" value="Peptidase_M24"/>
    <property type="match status" value="1"/>
</dbReference>
<dbReference type="PRINTS" id="PR00599">
    <property type="entry name" value="MAPEPTIDASE"/>
</dbReference>
<dbReference type="SUPFAM" id="SSF55920">
    <property type="entry name" value="Creatinase/aminopeptidase"/>
    <property type="match status" value="1"/>
</dbReference>
<dbReference type="SUPFAM" id="SSF46785">
    <property type="entry name" value="Winged helix' DNA-binding domain"/>
    <property type="match status" value="1"/>
</dbReference>
<evidence type="ECO:0000255" key="1">
    <source>
        <dbReference type="HAMAP-Rule" id="MF_03175"/>
    </source>
</evidence>
<evidence type="ECO:0000256" key="2">
    <source>
        <dbReference type="SAM" id="MobiDB-lite"/>
    </source>
</evidence>
<evidence type="ECO:0000305" key="3"/>
<gene>
    <name type="ORF">AFUB_086160</name>
</gene>
<accession>B0YAX5</accession>
<proteinExistence type="inferred from homology"/>
<name>MAP23_ASPFC</name>
<feature type="chain" id="PRO_0000407621" description="Methionine aminopeptidase 2-3">
    <location>
        <begin position="1"/>
        <end position="446"/>
    </location>
</feature>
<feature type="region of interest" description="Disordered" evidence="2">
    <location>
        <begin position="14"/>
        <end position="116"/>
    </location>
</feature>
<feature type="compositionally biased region" description="Basic residues" evidence="2">
    <location>
        <begin position="61"/>
        <end position="76"/>
    </location>
</feature>
<feature type="compositionally biased region" description="Polar residues" evidence="2">
    <location>
        <begin position="86"/>
        <end position="96"/>
    </location>
</feature>
<feature type="compositionally biased region" description="Basic and acidic residues" evidence="2">
    <location>
        <begin position="98"/>
        <end position="116"/>
    </location>
</feature>
<feature type="binding site" evidence="1">
    <location>
        <position position="199"/>
    </location>
    <ligand>
        <name>substrate</name>
    </ligand>
</feature>
<feature type="binding site" evidence="1">
    <location>
        <position position="219"/>
    </location>
    <ligand>
        <name>a divalent metal cation</name>
        <dbReference type="ChEBI" id="CHEBI:60240"/>
        <label>1</label>
    </ligand>
</feature>
<feature type="binding site" evidence="1">
    <location>
        <position position="230"/>
    </location>
    <ligand>
        <name>a divalent metal cation</name>
        <dbReference type="ChEBI" id="CHEBI:60240"/>
        <label>1</label>
    </ligand>
</feature>
<feature type="binding site" evidence="1">
    <location>
        <position position="230"/>
    </location>
    <ligand>
        <name>a divalent metal cation</name>
        <dbReference type="ChEBI" id="CHEBI:60240"/>
        <label>2</label>
        <note>catalytic</note>
    </ligand>
</feature>
<feature type="binding site" evidence="1">
    <location>
        <position position="299"/>
    </location>
    <ligand>
        <name>a divalent metal cation</name>
        <dbReference type="ChEBI" id="CHEBI:60240"/>
        <label>2</label>
        <note>catalytic</note>
    </ligand>
</feature>
<feature type="binding site" evidence="1">
    <location>
        <position position="307"/>
    </location>
    <ligand>
        <name>substrate</name>
    </ligand>
</feature>
<feature type="binding site" evidence="1">
    <location>
        <position position="332"/>
    </location>
    <ligand>
        <name>a divalent metal cation</name>
        <dbReference type="ChEBI" id="CHEBI:60240"/>
        <label>2</label>
        <note>catalytic</note>
    </ligand>
</feature>
<feature type="binding site" evidence="1">
    <location>
        <position position="427"/>
    </location>
    <ligand>
        <name>a divalent metal cation</name>
        <dbReference type="ChEBI" id="CHEBI:60240"/>
        <label>1</label>
    </ligand>
</feature>
<feature type="binding site" evidence="1">
    <location>
        <position position="427"/>
    </location>
    <ligand>
        <name>a divalent metal cation</name>
        <dbReference type="ChEBI" id="CHEBI:60240"/>
        <label>2</label>
        <note>catalytic</note>
    </ligand>
</feature>
<reference key="1">
    <citation type="journal article" date="2008" name="PLoS Genet.">
        <title>Genomic islands in the pathogenic filamentous fungus Aspergillus fumigatus.</title>
        <authorList>
            <person name="Fedorova N.D."/>
            <person name="Khaldi N."/>
            <person name="Joardar V.S."/>
            <person name="Maiti R."/>
            <person name="Amedeo P."/>
            <person name="Anderson M.J."/>
            <person name="Crabtree J."/>
            <person name="Silva J.C."/>
            <person name="Badger J.H."/>
            <person name="Albarraq A."/>
            <person name="Angiuoli S."/>
            <person name="Bussey H."/>
            <person name="Bowyer P."/>
            <person name="Cotty P.J."/>
            <person name="Dyer P.S."/>
            <person name="Egan A."/>
            <person name="Galens K."/>
            <person name="Fraser-Liggett C.M."/>
            <person name="Haas B.J."/>
            <person name="Inman J.M."/>
            <person name="Kent R."/>
            <person name="Lemieux S."/>
            <person name="Malavazi I."/>
            <person name="Orvis J."/>
            <person name="Roemer T."/>
            <person name="Ronning C.M."/>
            <person name="Sundaram J.P."/>
            <person name="Sutton G."/>
            <person name="Turner G."/>
            <person name="Venter J.C."/>
            <person name="White O.R."/>
            <person name="Whitty B.R."/>
            <person name="Youngman P."/>
            <person name="Wolfe K.H."/>
            <person name="Goldman G.H."/>
            <person name="Wortman J.R."/>
            <person name="Jiang B."/>
            <person name="Denning D.W."/>
            <person name="Nierman W.C."/>
        </authorList>
    </citation>
    <scope>NUCLEOTIDE SEQUENCE [LARGE SCALE GENOMIC DNA]</scope>
    <source>
        <strain>CBS 144.89 / FGSC A1163 / CEA10</strain>
    </source>
</reference>
<sequence length="446" mass="48996">MTVDAPELLEKLRITDAGANGADMSSSTSAAANGTGKEVDDGSDDDGTENPPAVAAEHSTAKKKKNKKRKPKKKQPKVQTDPPSIPLSQLFPNNSYPKGEEVEYKDENRYRTTSEEKRHLDNLNSDFLSDYRQAAEAHRQVRQWAQRNIKPGQTLLEIANGIEESARCLVGHDGLTEGDSLIAGMGFPTGLNIDNIVAHYSPNAGCKTVLAQNNVLKVDIGIHVGGRIVDSAFTMAFDPMYDNLLAAVKDATNTGVREAGIDVRVGELGGYIQEAMESYECEIRGKTYPIKAIRNLCGHTILPYSIHGTKNVPFVKSNDMTKMEEGDVFAIETFGSTGSGRYVEGGEVSHYALRGDADRKDLTLSSARSLLTAIKKNFSTIPFCRRYLDRIGQEKYLLGLNYLVKSGIVEDYPPLNEKPGTYTAQFEHTILLRPTVKEVISRGDDY</sequence>
<keyword id="KW-0031">Aminopeptidase</keyword>
<keyword id="KW-0963">Cytoplasm</keyword>
<keyword id="KW-0378">Hydrolase</keyword>
<keyword id="KW-0479">Metal-binding</keyword>
<keyword id="KW-0645">Protease</keyword>
<organism>
    <name type="scientific">Aspergillus fumigatus (strain CBS 144.89 / FGSC A1163 / CEA10)</name>
    <name type="common">Neosartorya fumigata</name>
    <dbReference type="NCBI Taxonomy" id="451804"/>
    <lineage>
        <taxon>Eukaryota</taxon>
        <taxon>Fungi</taxon>
        <taxon>Dikarya</taxon>
        <taxon>Ascomycota</taxon>
        <taxon>Pezizomycotina</taxon>
        <taxon>Eurotiomycetes</taxon>
        <taxon>Eurotiomycetidae</taxon>
        <taxon>Eurotiales</taxon>
        <taxon>Aspergillaceae</taxon>
        <taxon>Aspergillus</taxon>
        <taxon>Aspergillus subgen. Fumigati</taxon>
    </lineage>
</organism>